<dbReference type="EC" id="3.1.13.-" evidence="1"/>
<dbReference type="EMBL" id="AY342390">
    <property type="protein sequence ID" value="AAQ75070.1"/>
    <property type="molecule type" value="Genomic_RNA"/>
</dbReference>
<dbReference type="RefSeq" id="YP_516227.1">
    <property type="nucleotide sequence ID" value="NC_007903.1"/>
</dbReference>
<dbReference type="SMR" id="Q2A068"/>
<dbReference type="KEGG" id="vg:5075844"/>
<dbReference type="OrthoDB" id="3135at10239"/>
<dbReference type="Proteomes" id="UP000140987">
    <property type="component" value="Genome"/>
</dbReference>
<dbReference type="GO" id="GO:0019029">
    <property type="term" value="C:helical viral capsid"/>
    <property type="evidence" value="ECO:0007669"/>
    <property type="project" value="UniProtKB-UniRule"/>
</dbReference>
<dbReference type="GO" id="GO:0030430">
    <property type="term" value="C:host cell cytoplasm"/>
    <property type="evidence" value="ECO:0007669"/>
    <property type="project" value="UniProtKB-SubCell"/>
</dbReference>
<dbReference type="GO" id="GO:1990904">
    <property type="term" value="C:ribonucleoprotein complex"/>
    <property type="evidence" value="ECO:0007669"/>
    <property type="project" value="UniProtKB-KW"/>
</dbReference>
<dbReference type="GO" id="GO:0019013">
    <property type="term" value="C:viral nucleocapsid"/>
    <property type="evidence" value="ECO:0007669"/>
    <property type="project" value="UniProtKB-UniRule"/>
</dbReference>
<dbReference type="GO" id="GO:0016787">
    <property type="term" value="F:hydrolase activity"/>
    <property type="evidence" value="ECO:0007669"/>
    <property type="project" value="UniProtKB-KW"/>
</dbReference>
<dbReference type="GO" id="GO:0046872">
    <property type="term" value="F:metal ion binding"/>
    <property type="evidence" value="ECO:0007669"/>
    <property type="project" value="UniProtKB-UniRule"/>
</dbReference>
<dbReference type="GO" id="GO:0003723">
    <property type="term" value="F:RNA binding"/>
    <property type="evidence" value="ECO:0007669"/>
    <property type="project" value="UniProtKB-UniRule"/>
</dbReference>
<dbReference type="GO" id="GO:0039689">
    <property type="term" value="P:negative stranded viral RNA replication"/>
    <property type="evidence" value="ECO:0000250"/>
    <property type="project" value="UniProtKB"/>
</dbReference>
<dbReference type="GO" id="GO:0039696">
    <property type="term" value="P:RNA-templated viral transcription"/>
    <property type="evidence" value="ECO:0000250"/>
    <property type="project" value="UniProtKB"/>
</dbReference>
<dbReference type="GO" id="GO:0039724">
    <property type="term" value="P:symbiont-mediated suppression of host cytoplasmic pattern recognition receptor signaling pathway via inhibition of IKBKE activity"/>
    <property type="evidence" value="ECO:0007669"/>
    <property type="project" value="UniProtKB-UniRule"/>
</dbReference>
<dbReference type="FunFam" id="1.10.150.550:FF:000001">
    <property type="entry name" value="Nucleoprotein"/>
    <property type="match status" value="1"/>
</dbReference>
<dbReference type="FunFam" id="1.10.150.550:FF:000002">
    <property type="entry name" value="Nucleoprotein"/>
    <property type="match status" value="1"/>
</dbReference>
<dbReference type="FunFam" id="3.30.420.410:FF:000001">
    <property type="entry name" value="Nucleoprotein"/>
    <property type="match status" value="1"/>
</dbReference>
<dbReference type="Gene3D" id="3.30.420.410">
    <property type="entry name" value="Arenaviral nucleoprotein, C-terminal domain"/>
    <property type="match status" value="1"/>
</dbReference>
<dbReference type="Gene3D" id="1.10.150.550">
    <property type="entry name" value="Arenavirus nucleocapsid protein, head domain"/>
    <property type="match status" value="2"/>
</dbReference>
<dbReference type="HAMAP" id="MF_04085">
    <property type="entry name" value="ARENA_NCAP"/>
    <property type="match status" value="1"/>
</dbReference>
<dbReference type="InterPro" id="IPR000229">
    <property type="entry name" value="Nucleocapsid_arenaviridae"/>
</dbReference>
<dbReference type="InterPro" id="IPR035084">
    <property type="entry name" value="Nucleocapsid_C_arenaviridae"/>
</dbReference>
<dbReference type="InterPro" id="IPR038115">
    <property type="entry name" value="Nucleocapsid_C_sf"/>
</dbReference>
<dbReference type="InterPro" id="IPR035083">
    <property type="entry name" value="Nucleocapsid_N_arenaviridae"/>
</dbReference>
<dbReference type="Pfam" id="PF17290">
    <property type="entry name" value="Arena_ncap_C"/>
    <property type="match status" value="1"/>
</dbReference>
<dbReference type="Pfam" id="PF00843">
    <property type="entry name" value="Arena_nucleocap"/>
    <property type="match status" value="1"/>
</dbReference>
<dbReference type="PIRSF" id="PIRSF004029">
    <property type="entry name" value="N_ArenaV"/>
    <property type="match status" value="1"/>
</dbReference>
<keyword id="KW-0167">Capsid protein</keyword>
<keyword id="KW-1139">Helical capsid protein</keyword>
<keyword id="KW-1035">Host cytoplasm</keyword>
<keyword id="KW-0945">Host-virus interaction</keyword>
<keyword id="KW-0378">Hydrolase</keyword>
<keyword id="KW-1224">Inhibition of host IKBKE by virus</keyword>
<keyword id="KW-1090">Inhibition of host innate immune response by virus</keyword>
<keyword id="KW-1113">Inhibition of host RLR pathway by virus</keyword>
<keyword id="KW-0922">Interferon antiviral system evasion</keyword>
<keyword id="KW-0464">Manganese</keyword>
<keyword id="KW-0479">Metal-binding</keyword>
<keyword id="KW-0687">Ribonucleoprotein</keyword>
<keyword id="KW-0694">RNA-binding</keyword>
<keyword id="KW-0899">Viral immunoevasion</keyword>
<keyword id="KW-0543">Viral nucleoprotein</keyword>
<keyword id="KW-0946">Virion</keyword>
<keyword id="KW-0862">Zinc</keyword>
<protein>
    <recommendedName>
        <fullName evidence="1">Nucleoprotein</fullName>
        <ecNumber evidence="1">3.1.13.-</ecNumber>
    </recommendedName>
    <alternativeName>
        <fullName evidence="1">Nucleocapsid protein</fullName>
    </alternativeName>
    <alternativeName>
        <fullName evidence="1">Protein N</fullName>
    </alternativeName>
</protein>
<proteinExistence type="inferred from homology"/>
<name>NCAP_MOBVC</name>
<feature type="chain" id="PRO_0000361010" description="Nucleoprotein">
    <location>
        <begin position="1"/>
        <end position="568"/>
    </location>
</feature>
<feature type="region of interest" description="Binding site for the cap structure m7GTP" evidence="1">
    <location>
        <begin position="54"/>
        <end position="240"/>
    </location>
</feature>
<feature type="binding site" evidence="1">
    <location>
        <position position="388"/>
    </location>
    <ligand>
        <name>Mn(2+)</name>
        <dbReference type="ChEBI" id="CHEBI:29035"/>
    </ligand>
</feature>
<feature type="binding site" evidence="1">
    <location>
        <position position="390"/>
    </location>
    <ligand>
        <name>Mn(2+)</name>
        <dbReference type="ChEBI" id="CHEBI:29035"/>
    </ligand>
</feature>
<feature type="binding site" evidence="1">
    <location>
        <position position="398"/>
    </location>
    <ligand>
        <name>Zn(2+)</name>
        <dbReference type="ChEBI" id="CHEBI:29105"/>
    </ligand>
</feature>
<feature type="binding site" evidence="1">
    <location>
        <position position="505"/>
    </location>
    <ligand>
        <name>Zn(2+)</name>
        <dbReference type="ChEBI" id="CHEBI:29105"/>
    </ligand>
</feature>
<feature type="binding site" evidence="1">
    <location>
        <position position="508"/>
    </location>
    <ligand>
        <name>Zn(2+)</name>
        <dbReference type="ChEBI" id="CHEBI:29105"/>
    </ligand>
</feature>
<feature type="binding site" evidence="1">
    <location>
        <position position="528"/>
    </location>
    <ligand>
        <name>Zn(2+)</name>
        <dbReference type="ChEBI" id="CHEBI:29105"/>
    </ligand>
</feature>
<feature type="binding site" evidence="1">
    <location>
        <position position="532"/>
    </location>
    <ligand>
        <name>Mn(2+)</name>
        <dbReference type="ChEBI" id="CHEBI:29035"/>
    </ligand>
</feature>
<feature type="site" description="Important for exonuclease activity" evidence="1">
    <location>
        <position position="465"/>
    </location>
</feature>
<evidence type="ECO:0000255" key="1">
    <source>
        <dbReference type="HAMAP-Rule" id="MF_04085"/>
    </source>
</evidence>
<comment type="function">
    <text evidence="1">Encapsidates the genome, protecting it from nucleases. The encapsidated genomic RNA is termed the nucleocapsid (NC). Serves as template for viral transcription and replication. The increased presence of protein N in host cell does not seem to trigger the switch from transcription to replication as observed in other negative strain RNA viruses. Through the interaction with host IKBKE, strongly inhibits the phosphorylation and nuclear translocation of host IRF3, a protein involved in interferon activation pathway, leading to the inhibition of interferon-beta and IRF3-dependent promoters activation. Also encodes a functional 3'-5' exoribonuclease that degrades preferentially dsRNA substrates and thereby participates in the suppression of interferon induction.</text>
</comment>
<comment type="subunit">
    <text evidence="1">Homomultimerizes to form the nucleocapsid. Binds to viral genomic RNA. Interacts with glycoprotein G2. Interacts with protein Z; this interaction probably directs the encapsidated genome to budding sites. Interacts with protein L; this interaction does not interfere with Z-L interaction. Interacts with host IKBKE (via Protein kinase domain); the interaction inhibits IKBKE kinase activity.</text>
</comment>
<comment type="subcellular location">
    <subcellularLocation>
        <location evidence="1">Virion</location>
    </subcellularLocation>
    <subcellularLocation>
        <location evidence="1">Host cytoplasm</location>
    </subcellularLocation>
</comment>
<comment type="domain">
    <text evidence="1">The N-terminal region is important for the cap-binding activity while the C-terminal region contains the 3'-5' exoribonuclease activity. A CCHE zinc binding site is present in the C-terminal region and may thus contribute to the substrate binding and/or the specificity of the exonuclease activity.</text>
</comment>
<comment type="similarity">
    <text evidence="1">Belongs to the arenaviridae nucleocapsid protein family.</text>
</comment>
<accession>Q2A068</accession>
<reference key="1">
    <citation type="journal article" date="2006" name="Virology">
        <title>Phylogeny and evolution of old world arenaviruses.</title>
        <authorList>
            <person name="Emonet S."/>
            <person name="Lemasson J.J."/>
            <person name="Gonzalez J.P."/>
            <person name="de Lamballerie X."/>
            <person name="Charrel R.N."/>
        </authorList>
    </citation>
    <scope>NUCLEOTIDE SEQUENCE [GENOMIC RNA]</scope>
</reference>
<reference key="2">
    <citation type="journal article" date="2008" name="Curr. Opin. Microbiol.">
        <title>Phylogeny of the genus Arenavirus.</title>
        <authorList>
            <person name="Charrel R.N."/>
            <person name="de Lamballerie X."/>
            <person name="Emonet S."/>
        </authorList>
    </citation>
    <scope>NUCLEOTIDE SEQUENCE [GENOMIC RNA]</scope>
</reference>
<organismHost>
    <name type="scientific">Praomys</name>
    <name type="common">African soft-furred rats</name>
    <dbReference type="NCBI Taxonomy" id="10111"/>
</organismHost>
<gene>
    <name evidence="1" type="primary">N</name>
</gene>
<sequence length="568" mass="63259">MSNSKEIKSFLWTQSLRRELSGFCTNTRVQVIKDAQSLLHGLDFSEVSNIQRLMRKEKRDDSDLKRLRDLNQTVNNLVELKSSQQKNTLRVGALTSDDLLVLAADLDRLKAKVNRSERPLTGGVYMGNLTQQQLDQRKILLQLVGMGGSRVPPRGGDGIVRVWDVRNPDLLNNQFGTMPSLTLACLCKQGQEDLSDVVKALTDLGLVYTAKYPNLSDLDKLTHTHPVLGLIDGNKSAINISGYNFSLNAAVKAGASLLDGGNMLETIKVTPKNIDTILKCVLKVKRSVGMFVSDTPGERNPYENILYKICLSGDGWPYIACRTSISGRAWDNTEVDLGTNKDPINKGPPTSNKTAGAAGFNAGLTYSQMMELKDSMLQIDPTAKTWVDIEGRADDPVEIAIYQPSNGHYIHFYREPTDIKQFRQDAKYSHGIDVQDLFTTQPGLTSAVLENLPKNMVLTCQGVEDIRKLLDSQGRKDIKLIDVSMQKADARKFEHQIWDEYKHLCSMHTGIVVEKKKRGGKEEITPHCALLDCLMFEATTRNSLDIVIPRPVLSKDLVFRSATPKVIL</sequence>
<organism>
    <name type="scientific">Mobala mammarenavirus (isolate Rat/Central African Republic/Acar 3080/1983)</name>
    <name type="common">MOBV</name>
    <dbReference type="NCBI Taxonomy" id="3052325"/>
    <lineage>
        <taxon>Viruses</taxon>
        <taxon>Riboviria</taxon>
        <taxon>Orthornavirae</taxon>
        <taxon>Negarnaviricota</taxon>
        <taxon>Polyploviricotina</taxon>
        <taxon>Ellioviricetes</taxon>
        <taxon>Bunyavirales</taxon>
        <taxon>Arenaviridae</taxon>
        <taxon>Mammarenavirus</taxon>
    </lineage>
</organism>